<name>CLUA1_HUMAN</name>
<comment type="function">
    <text evidence="1">Required for cilia biogenesis. Appears to function within the multiple intraflagellar transport complex B (IFT-B). Key regulator of hedgehog signaling.</text>
</comment>
<comment type="subunit">
    <text evidence="4 8">Interacts with CLU/clusterin (PubMed:15480429). Interacts with UBXN10; the interaction is direct (PubMed:26389662).</text>
</comment>
<comment type="interaction">
    <interactant intactId="EBI-739780">
        <id>Q96AJ1</id>
    </interactant>
    <interactant intactId="EBI-739784">
        <id>Q9BW66</id>
        <label>CINP</label>
    </interactant>
    <organismsDiffer>false</organismsDiffer>
    <experiments>5</experiments>
</comment>
<comment type="interaction">
    <interactant intactId="EBI-739780">
        <id>Q96AJ1</id>
    </interactant>
    <interactant intactId="EBI-739773">
        <id>Q9BSW2</id>
        <label>CRACR2A</label>
    </interactant>
    <organismsDiffer>false</organismsDiffer>
    <experiments>2</experiments>
</comment>
<comment type="interaction">
    <interactant intactId="EBI-739780">
        <id>Q96AJ1</id>
    </interactant>
    <interactant intactId="EBI-739552">
        <id>P43364</id>
        <label>MAGEA11</label>
    </interactant>
    <organismsDiffer>false</organismsDiffer>
    <experiments>5</experiments>
</comment>
<comment type="interaction">
    <interactant intactId="EBI-739780">
        <id>Q96AJ1</id>
    </interactant>
    <interactant intactId="EBI-10178634">
        <id>P43364-2</id>
        <label>MAGEA11</label>
    </interactant>
    <organismsDiffer>false</organismsDiffer>
    <experiments>3</experiments>
</comment>
<comment type="interaction">
    <interactant intactId="EBI-739780">
        <id>Q96AJ1</id>
    </interactant>
    <interactant intactId="EBI-3906629">
        <id>P15173</id>
        <label>MYOG</label>
    </interactant>
    <organismsDiffer>false</organismsDiffer>
    <experiments>7</experiments>
</comment>
<comment type="subcellular location">
    <subcellularLocation>
        <location evidence="6">Cell projection</location>
        <location evidence="6">Cilium</location>
    </subcellularLocation>
    <subcellularLocation>
        <location evidence="4">Nucleus</location>
    </subcellularLocation>
</comment>
<comment type="alternative products">
    <event type="alternative splicing"/>
    <isoform>
        <id>Q96AJ1-1</id>
        <name>1</name>
        <sequence type="displayed"/>
    </isoform>
    <isoform>
        <id>Q96AJ1-2</id>
        <name>2</name>
        <sequence type="described" ref="VSP_019229"/>
    </isoform>
</comment>
<comment type="tissue specificity">
    <text evidence="4 7">Expressed in testis, thyroid and trachea and to a lower extent in spinal cord and adrenal gland. Highly expressed in colon cancer and osteosarcoma cell lines.</text>
</comment>
<comment type="miscellaneous">
    <text evidence="12 13 14">Associated with a number of cancers such as colon (PubMed:15480429) and bone cancer (PubMed:17203229). Possibly involved in polycystic kidney diseases (PubMed:15530380).</text>
</comment>
<comment type="similarity">
    <text evidence="11">Belongs to the CLUAP1 family.</text>
</comment>
<comment type="sequence caution" evidence="11">
    <conflict type="miscellaneous discrepancy">
        <sequence resource="EMBL-CDS" id="BAA31618"/>
    </conflict>
    <text>Intron retention.</text>
</comment>
<comment type="sequence caution" evidence="11">
    <conflict type="erroneous initiation">
        <sequence resource="EMBL-CDS" id="BAB14523"/>
    </conflict>
    <text>Truncated N-terminus.</text>
</comment>
<protein>
    <recommendedName>
        <fullName>Clusterin-associated protein 1</fullName>
    </recommendedName>
    <alternativeName>
        <fullName evidence="10">Qilin</fullName>
    </alternativeName>
</protein>
<proteinExistence type="evidence at protein level"/>
<dbReference type="EMBL" id="AB089691">
    <property type="protein sequence ID" value="BAD44779.1"/>
    <property type="molecule type" value="mRNA"/>
</dbReference>
<dbReference type="EMBL" id="AB014543">
    <property type="protein sequence ID" value="BAA31618.1"/>
    <property type="status" value="ALT_SEQ"/>
    <property type="molecule type" value="mRNA"/>
</dbReference>
<dbReference type="EMBL" id="AK023319">
    <property type="protein sequence ID" value="BAB14523.1"/>
    <property type="status" value="ALT_INIT"/>
    <property type="molecule type" value="mRNA"/>
</dbReference>
<dbReference type="EMBL" id="AK023359">
    <property type="protein sequence ID" value="BAB14542.1"/>
    <property type="molecule type" value="mRNA"/>
</dbReference>
<dbReference type="EMBL" id="BC017070">
    <property type="protein sequence ID" value="AAH17070.3"/>
    <property type="molecule type" value="mRNA"/>
</dbReference>
<dbReference type="CCDS" id="CCDS32381.1">
    <molecule id="Q96AJ1-1"/>
</dbReference>
<dbReference type="CCDS" id="CCDS45398.1">
    <molecule id="Q96AJ1-2"/>
</dbReference>
<dbReference type="RefSeq" id="NP_055856.1">
    <molecule id="Q96AJ1-1"/>
    <property type="nucleotide sequence ID" value="NM_015041.3"/>
</dbReference>
<dbReference type="RefSeq" id="NP_079069.1">
    <molecule id="Q96AJ1-2"/>
    <property type="nucleotide sequence ID" value="NM_024793.3"/>
</dbReference>
<dbReference type="SMR" id="Q96AJ1"/>
<dbReference type="BioGRID" id="116694">
    <property type="interactions" value="228"/>
</dbReference>
<dbReference type="ComplexPortal" id="CPX-5022">
    <property type="entry name" value="Intraflagellar transport complex B"/>
</dbReference>
<dbReference type="FunCoup" id="Q96AJ1">
    <property type="interactions" value="1306"/>
</dbReference>
<dbReference type="IntAct" id="Q96AJ1">
    <property type="interactions" value="30"/>
</dbReference>
<dbReference type="STRING" id="9606.ENSP00000344392"/>
<dbReference type="iPTMnet" id="Q96AJ1"/>
<dbReference type="PhosphoSitePlus" id="Q96AJ1"/>
<dbReference type="BioMuta" id="CLUAP1"/>
<dbReference type="DMDM" id="108935970"/>
<dbReference type="jPOST" id="Q96AJ1"/>
<dbReference type="MassIVE" id="Q96AJ1"/>
<dbReference type="PaxDb" id="9606-ENSP00000460850"/>
<dbReference type="PeptideAtlas" id="Q96AJ1"/>
<dbReference type="ProteomicsDB" id="75967">
    <molecule id="Q96AJ1-1"/>
</dbReference>
<dbReference type="ProteomicsDB" id="75968">
    <molecule id="Q96AJ1-2"/>
</dbReference>
<dbReference type="Pumba" id="Q96AJ1"/>
<dbReference type="Antibodypedia" id="24143">
    <property type="antibodies" value="142 antibodies from 26 providers"/>
</dbReference>
<dbReference type="DNASU" id="23059"/>
<dbReference type="Ensembl" id="ENST00000572600.5">
    <molecule id="Q96AJ1-2"/>
    <property type="protein sequence ID" value="ENSP00000460889.1"/>
    <property type="gene ID" value="ENSG00000103351.13"/>
</dbReference>
<dbReference type="Ensembl" id="ENST00000576634.6">
    <molecule id="Q96AJ1-1"/>
    <property type="protein sequence ID" value="ENSP00000460850.1"/>
    <property type="gene ID" value="ENSG00000103351.13"/>
</dbReference>
<dbReference type="GeneID" id="23059"/>
<dbReference type="KEGG" id="hsa:23059"/>
<dbReference type="MANE-Select" id="ENST00000576634.6">
    <property type="protein sequence ID" value="ENSP00000460850.1"/>
    <property type="RefSeq nucleotide sequence ID" value="NM_015041.3"/>
    <property type="RefSeq protein sequence ID" value="NP_055856.1"/>
</dbReference>
<dbReference type="UCSC" id="uc002cvk.3">
    <molecule id="Q96AJ1-1"/>
    <property type="organism name" value="human"/>
</dbReference>
<dbReference type="AGR" id="HGNC:19009"/>
<dbReference type="CTD" id="23059"/>
<dbReference type="DisGeNET" id="23059"/>
<dbReference type="GeneCards" id="CLUAP1"/>
<dbReference type="HGNC" id="HGNC:19009">
    <property type="gene designation" value="CLUAP1"/>
</dbReference>
<dbReference type="HPA" id="ENSG00000103351">
    <property type="expression patterns" value="Low tissue specificity"/>
</dbReference>
<dbReference type="MalaCards" id="CLUAP1"/>
<dbReference type="neXtProt" id="NX_Q96AJ1"/>
<dbReference type="OpenTargets" id="ENSG00000103351"/>
<dbReference type="PharmGKB" id="PA128394600"/>
<dbReference type="VEuPathDB" id="HostDB:ENSG00000103351"/>
<dbReference type="eggNOG" id="KOG3647">
    <property type="taxonomic scope" value="Eukaryota"/>
</dbReference>
<dbReference type="GeneTree" id="ENSGT00390000008957"/>
<dbReference type="HOGENOM" id="CLU_098325_0_0_1"/>
<dbReference type="InParanoid" id="Q96AJ1"/>
<dbReference type="OMA" id="RIRPAHM"/>
<dbReference type="OrthoDB" id="9536059at2759"/>
<dbReference type="PAN-GO" id="Q96AJ1">
    <property type="GO annotations" value="4 GO annotations based on evolutionary models"/>
</dbReference>
<dbReference type="PhylomeDB" id="Q96AJ1"/>
<dbReference type="TreeFam" id="TF314639"/>
<dbReference type="PathwayCommons" id="Q96AJ1"/>
<dbReference type="Reactome" id="R-HSA-5620924">
    <property type="pathway name" value="Intraflagellar transport"/>
</dbReference>
<dbReference type="SignaLink" id="Q96AJ1"/>
<dbReference type="BioGRID-ORCS" id="23059">
    <property type="hits" value="14 hits in 1155 CRISPR screens"/>
</dbReference>
<dbReference type="ChiTaRS" id="CLUAP1">
    <property type="organism name" value="human"/>
</dbReference>
<dbReference type="GeneWiki" id="CLUAP1"/>
<dbReference type="GenomeRNAi" id="23059"/>
<dbReference type="Pharos" id="Q96AJ1">
    <property type="development level" value="Tbio"/>
</dbReference>
<dbReference type="PRO" id="PR:Q96AJ1"/>
<dbReference type="Proteomes" id="UP000005640">
    <property type="component" value="Chromosome 16"/>
</dbReference>
<dbReference type="RNAct" id="Q96AJ1">
    <property type="molecule type" value="protein"/>
</dbReference>
<dbReference type="Bgee" id="ENSG00000103351">
    <property type="expression patterns" value="Expressed in bronchial epithelial cell and 200 other cell types or tissues"/>
</dbReference>
<dbReference type="ExpressionAtlas" id="Q96AJ1">
    <property type="expression patterns" value="baseline and differential"/>
</dbReference>
<dbReference type="GO" id="GO:0015629">
    <property type="term" value="C:actin cytoskeleton"/>
    <property type="evidence" value="ECO:0000314"/>
    <property type="project" value="HPA"/>
</dbReference>
<dbReference type="GO" id="GO:0005813">
    <property type="term" value="C:centrosome"/>
    <property type="evidence" value="ECO:0007669"/>
    <property type="project" value="Ensembl"/>
</dbReference>
<dbReference type="GO" id="GO:0097546">
    <property type="term" value="C:ciliary base"/>
    <property type="evidence" value="ECO:0007669"/>
    <property type="project" value="Ensembl"/>
</dbReference>
<dbReference type="GO" id="GO:0097542">
    <property type="term" value="C:ciliary tip"/>
    <property type="evidence" value="ECO:0000304"/>
    <property type="project" value="Reactome"/>
</dbReference>
<dbReference type="GO" id="GO:0005929">
    <property type="term" value="C:cilium"/>
    <property type="evidence" value="ECO:0000314"/>
    <property type="project" value="HPA"/>
</dbReference>
<dbReference type="GO" id="GO:0043231">
    <property type="term" value="C:intracellular membrane-bounded organelle"/>
    <property type="evidence" value="ECO:0000314"/>
    <property type="project" value="HPA"/>
</dbReference>
<dbReference type="GO" id="GO:0030991">
    <property type="term" value="C:intraciliary transport particle A"/>
    <property type="evidence" value="ECO:0007669"/>
    <property type="project" value="Ensembl"/>
</dbReference>
<dbReference type="GO" id="GO:0030992">
    <property type="term" value="C:intraciliary transport particle B"/>
    <property type="evidence" value="ECO:0000353"/>
    <property type="project" value="ComplexPortal"/>
</dbReference>
<dbReference type="GO" id="GO:0005815">
    <property type="term" value="C:microtubule organizing center"/>
    <property type="evidence" value="ECO:0000318"/>
    <property type="project" value="GO_Central"/>
</dbReference>
<dbReference type="GO" id="GO:0005654">
    <property type="term" value="C:nucleoplasm"/>
    <property type="evidence" value="ECO:0000314"/>
    <property type="project" value="HPA"/>
</dbReference>
<dbReference type="GO" id="GO:0035082">
    <property type="term" value="P:axoneme assembly"/>
    <property type="evidence" value="ECO:0007669"/>
    <property type="project" value="Ensembl"/>
</dbReference>
<dbReference type="GO" id="GO:0060271">
    <property type="term" value="P:cilium assembly"/>
    <property type="evidence" value="ECO:0000318"/>
    <property type="project" value="GO_Central"/>
</dbReference>
<dbReference type="GO" id="GO:0021508">
    <property type="term" value="P:floor plate formation"/>
    <property type="evidence" value="ECO:0007669"/>
    <property type="project" value="Ensembl"/>
</dbReference>
<dbReference type="GO" id="GO:0001947">
    <property type="term" value="P:heart looping"/>
    <property type="evidence" value="ECO:0007669"/>
    <property type="project" value="Ensembl"/>
</dbReference>
<dbReference type="GO" id="GO:0035720">
    <property type="term" value="P:intraciliary anterograde transport"/>
    <property type="evidence" value="ECO:0000303"/>
    <property type="project" value="ComplexPortal"/>
</dbReference>
<dbReference type="GO" id="GO:0001843">
    <property type="term" value="P:neural tube closure"/>
    <property type="evidence" value="ECO:0007669"/>
    <property type="project" value="Ensembl"/>
</dbReference>
<dbReference type="GO" id="GO:0007224">
    <property type="term" value="P:smoothened signaling pathway"/>
    <property type="evidence" value="ECO:0007669"/>
    <property type="project" value="Ensembl"/>
</dbReference>
<dbReference type="InterPro" id="IPR019366">
    <property type="entry name" value="Clusterin-associated_protein-1"/>
</dbReference>
<dbReference type="PANTHER" id="PTHR21547">
    <property type="entry name" value="CLUSTERIN ASSOCIATED PROTEIN 1"/>
    <property type="match status" value="1"/>
</dbReference>
<dbReference type="PANTHER" id="PTHR21547:SF0">
    <property type="entry name" value="CLUSTERIN-ASSOCIATED PROTEIN 1"/>
    <property type="match status" value="1"/>
</dbReference>
<dbReference type="Pfam" id="PF10234">
    <property type="entry name" value="Cluap1"/>
    <property type="match status" value="1"/>
</dbReference>
<organism>
    <name type="scientific">Homo sapiens</name>
    <name type="common">Human</name>
    <dbReference type="NCBI Taxonomy" id="9606"/>
    <lineage>
        <taxon>Eukaryota</taxon>
        <taxon>Metazoa</taxon>
        <taxon>Chordata</taxon>
        <taxon>Craniata</taxon>
        <taxon>Vertebrata</taxon>
        <taxon>Euteleostomi</taxon>
        <taxon>Mammalia</taxon>
        <taxon>Eutheria</taxon>
        <taxon>Euarchontoglires</taxon>
        <taxon>Primates</taxon>
        <taxon>Haplorrhini</taxon>
        <taxon>Catarrhini</taxon>
        <taxon>Hominidae</taxon>
        <taxon>Homo</taxon>
    </lineage>
</organism>
<feature type="chain" id="PRO_0000239451" description="Clusterin-associated protein 1">
    <location>
        <begin position="1"/>
        <end position="413"/>
    </location>
</feature>
<feature type="region of interest" description="Disordered" evidence="3">
    <location>
        <begin position="305"/>
        <end position="413"/>
    </location>
</feature>
<feature type="coiled-coil region" evidence="2">
    <location>
        <begin position="198"/>
        <end position="291"/>
    </location>
</feature>
<feature type="compositionally biased region" description="Acidic residues" evidence="3">
    <location>
        <begin position="312"/>
        <end position="328"/>
    </location>
</feature>
<feature type="compositionally biased region" description="Acidic residues" evidence="3">
    <location>
        <begin position="360"/>
        <end position="388"/>
    </location>
</feature>
<feature type="modified residue" description="Phosphoserine" evidence="1">
    <location>
        <position position="314"/>
    </location>
</feature>
<feature type="modified residue" description="Phosphoserine" evidence="1">
    <location>
        <position position="324"/>
    </location>
</feature>
<feature type="modified residue" description="Phosphoserine" evidence="1">
    <location>
        <position position="326"/>
    </location>
</feature>
<feature type="modified residue" description="Phosphoserine" evidence="15">
    <location>
        <position position="409"/>
    </location>
</feature>
<feature type="splice variant" id="VSP_019229" description="In isoform 2." evidence="9">
    <location>
        <begin position="1"/>
        <end position="166"/>
    </location>
</feature>
<feature type="sequence variant" id="VAR_050869" description="In dbSNP:rs34115694.">
    <original>A</original>
    <variation>S</variation>
    <location>
        <position position="68"/>
    </location>
</feature>
<feature type="sequence variant" id="VAR_050870" description="In dbSNP:rs9790." evidence="5">
    <original>R</original>
    <variation>W</variation>
    <location>
        <position position="401"/>
    </location>
</feature>
<evidence type="ECO:0000250" key="1">
    <source>
        <dbReference type="UniProtKB" id="Q8R3P7"/>
    </source>
</evidence>
<evidence type="ECO:0000255" key="2"/>
<evidence type="ECO:0000256" key="3">
    <source>
        <dbReference type="SAM" id="MobiDB-lite"/>
    </source>
</evidence>
<evidence type="ECO:0000269" key="4">
    <source>
    </source>
</evidence>
<evidence type="ECO:0000269" key="5">
    <source>
    </source>
</evidence>
<evidence type="ECO:0000269" key="6">
    <source>
    </source>
</evidence>
<evidence type="ECO:0000269" key="7">
    <source>
    </source>
</evidence>
<evidence type="ECO:0000269" key="8">
    <source>
    </source>
</evidence>
<evidence type="ECO:0000303" key="9">
    <source>
    </source>
</evidence>
<evidence type="ECO:0000303" key="10">
    <source>
    </source>
</evidence>
<evidence type="ECO:0000305" key="11"/>
<evidence type="ECO:0000305" key="12">
    <source>
    </source>
</evidence>
<evidence type="ECO:0000305" key="13">
    <source>
    </source>
</evidence>
<evidence type="ECO:0000305" key="14">
    <source>
    </source>
</evidence>
<evidence type="ECO:0007744" key="15">
    <source>
    </source>
</evidence>
<reference key="1">
    <citation type="journal article" date="2004" name="Oncogene">
        <title>Isolation and characterization of a novel gene CLUAP1 whose expression is frequently upregulated in colon cancer.</title>
        <authorList>
            <person name="Takahashi M."/>
            <person name="Lin Y.-M."/>
            <person name="Nakamura Y."/>
            <person name="Furukawa Y."/>
        </authorList>
    </citation>
    <scope>NUCLEOTIDE SEQUENCE [MRNA] (ISOFORM 1)</scope>
    <scope>INTERACTION WITH CLU</scope>
    <scope>TISSUE SPECIFICITY</scope>
    <scope>SUBCELLULAR LOCATION</scope>
    <source>
        <tissue>Colon tumor</tissue>
    </source>
</reference>
<reference key="2">
    <citation type="journal article" date="1998" name="DNA Res.">
        <title>Prediction of the coding sequences of unidentified human genes. X. The complete sequences of 100 new cDNA clones from brain which can code for large proteins in vitro.</title>
        <authorList>
            <person name="Ishikawa K."/>
            <person name="Nagase T."/>
            <person name="Suyama M."/>
            <person name="Miyajima N."/>
            <person name="Tanaka A."/>
            <person name="Kotani H."/>
            <person name="Nomura N."/>
            <person name="Ohara O."/>
        </authorList>
    </citation>
    <scope>NUCLEOTIDE SEQUENCE [LARGE SCALE MRNA] (ISOFORM 1)</scope>
    <source>
        <tissue>Brain</tissue>
    </source>
</reference>
<reference key="3">
    <citation type="journal article" date="2004" name="Nat. Genet.">
        <title>Complete sequencing and characterization of 21,243 full-length human cDNAs.</title>
        <authorList>
            <person name="Ota T."/>
            <person name="Suzuki Y."/>
            <person name="Nishikawa T."/>
            <person name="Otsuki T."/>
            <person name="Sugiyama T."/>
            <person name="Irie R."/>
            <person name="Wakamatsu A."/>
            <person name="Hayashi K."/>
            <person name="Sato H."/>
            <person name="Nagai K."/>
            <person name="Kimura K."/>
            <person name="Makita H."/>
            <person name="Sekine M."/>
            <person name="Obayashi M."/>
            <person name="Nishi T."/>
            <person name="Shibahara T."/>
            <person name="Tanaka T."/>
            <person name="Ishii S."/>
            <person name="Yamamoto J."/>
            <person name="Saito K."/>
            <person name="Kawai Y."/>
            <person name="Isono Y."/>
            <person name="Nakamura Y."/>
            <person name="Nagahari K."/>
            <person name="Murakami K."/>
            <person name="Yasuda T."/>
            <person name="Iwayanagi T."/>
            <person name="Wagatsuma M."/>
            <person name="Shiratori A."/>
            <person name="Sudo H."/>
            <person name="Hosoiri T."/>
            <person name="Kaku Y."/>
            <person name="Kodaira H."/>
            <person name="Kondo H."/>
            <person name="Sugawara M."/>
            <person name="Takahashi M."/>
            <person name="Kanda K."/>
            <person name="Yokoi T."/>
            <person name="Furuya T."/>
            <person name="Kikkawa E."/>
            <person name="Omura Y."/>
            <person name="Abe K."/>
            <person name="Kamihara K."/>
            <person name="Katsuta N."/>
            <person name="Sato K."/>
            <person name="Tanikawa M."/>
            <person name="Yamazaki M."/>
            <person name="Ninomiya K."/>
            <person name="Ishibashi T."/>
            <person name="Yamashita H."/>
            <person name="Murakawa K."/>
            <person name="Fujimori K."/>
            <person name="Tanai H."/>
            <person name="Kimata M."/>
            <person name="Watanabe M."/>
            <person name="Hiraoka S."/>
            <person name="Chiba Y."/>
            <person name="Ishida S."/>
            <person name="Ono Y."/>
            <person name="Takiguchi S."/>
            <person name="Watanabe S."/>
            <person name="Yosida M."/>
            <person name="Hotuta T."/>
            <person name="Kusano J."/>
            <person name="Kanehori K."/>
            <person name="Takahashi-Fujii A."/>
            <person name="Hara H."/>
            <person name="Tanase T.-O."/>
            <person name="Nomura Y."/>
            <person name="Togiya S."/>
            <person name="Komai F."/>
            <person name="Hara R."/>
            <person name="Takeuchi K."/>
            <person name="Arita M."/>
            <person name="Imose N."/>
            <person name="Musashino K."/>
            <person name="Yuuki H."/>
            <person name="Oshima A."/>
            <person name="Sasaki N."/>
            <person name="Aotsuka S."/>
            <person name="Yoshikawa Y."/>
            <person name="Matsunawa H."/>
            <person name="Ichihara T."/>
            <person name="Shiohata N."/>
            <person name="Sano S."/>
            <person name="Moriya S."/>
            <person name="Momiyama H."/>
            <person name="Satoh N."/>
            <person name="Takami S."/>
            <person name="Terashima Y."/>
            <person name="Suzuki O."/>
            <person name="Nakagawa S."/>
            <person name="Senoh A."/>
            <person name="Mizoguchi H."/>
            <person name="Goto Y."/>
            <person name="Shimizu F."/>
            <person name="Wakebe H."/>
            <person name="Hishigaki H."/>
            <person name="Watanabe T."/>
            <person name="Sugiyama A."/>
            <person name="Takemoto M."/>
            <person name="Kawakami B."/>
            <person name="Yamazaki M."/>
            <person name="Watanabe K."/>
            <person name="Kumagai A."/>
            <person name="Itakura S."/>
            <person name="Fukuzumi Y."/>
            <person name="Fujimori Y."/>
            <person name="Komiyama M."/>
            <person name="Tashiro H."/>
            <person name="Tanigami A."/>
            <person name="Fujiwara T."/>
            <person name="Ono T."/>
            <person name="Yamada K."/>
            <person name="Fujii Y."/>
            <person name="Ozaki K."/>
            <person name="Hirao M."/>
            <person name="Ohmori Y."/>
            <person name="Kawabata A."/>
            <person name="Hikiji T."/>
            <person name="Kobatake N."/>
            <person name="Inagaki H."/>
            <person name="Ikema Y."/>
            <person name="Okamoto S."/>
            <person name="Okitani R."/>
            <person name="Kawakami T."/>
            <person name="Noguchi S."/>
            <person name="Itoh T."/>
            <person name="Shigeta K."/>
            <person name="Senba T."/>
            <person name="Matsumura K."/>
            <person name="Nakajima Y."/>
            <person name="Mizuno T."/>
            <person name="Morinaga M."/>
            <person name="Sasaki M."/>
            <person name="Togashi T."/>
            <person name="Oyama M."/>
            <person name="Hata H."/>
            <person name="Watanabe M."/>
            <person name="Komatsu T."/>
            <person name="Mizushima-Sugano J."/>
            <person name="Satoh T."/>
            <person name="Shirai Y."/>
            <person name="Takahashi Y."/>
            <person name="Nakagawa K."/>
            <person name="Okumura K."/>
            <person name="Nagase T."/>
            <person name="Nomura N."/>
            <person name="Kikuchi H."/>
            <person name="Masuho Y."/>
            <person name="Yamashita R."/>
            <person name="Nakai K."/>
            <person name="Yada T."/>
            <person name="Nakamura Y."/>
            <person name="Ohara O."/>
            <person name="Isogai T."/>
            <person name="Sugano S."/>
        </authorList>
    </citation>
    <scope>NUCLEOTIDE SEQUENCE [LARGE SCALE MRNA] (ISOFORM 2)</scope>
    <scope>NUCLEOTIDE SEQUENCE [LARGE SCALE MRNA] OF 222-413 (ISOFORMS 1/2)</scope>
    <source>
        <tissue>Ovary</tissue>
    </source>
</reference>
<reference key="4">
    <citation type="journal article" date="2004" name="Genome Res.">
        <title>The status, quality, and expansion of the NIH full-length cDNA project: the Mammalian Gene Collection (MGC).</title>
        <authorList>
            <consortium name="The MGC Project Team"/>
        </authorList>
    </citation>
    <scope>NUCLEOTIDE SEQUENCE [LARGE SCALE MRNA] (ISOFORM 1)</scope>
    <scope>VARIANT TRP-401</scope>
    <source>
        <tissue>Skin</tissue>
    </source>
</reference>
<reference key="5">
    <citation type="journal article" date="2004" name="Curr. Biol.">
        <title>Human cilia proteome contains homolog of zebrafish polycystic kidney disease gene qilin.</title>
        <authorList>
            <person name="Marshall W.F."/>
        </authorList>
    </citation>
    <scope>IDENTIFICATION</scope>
    <scope>SUBCELLULAR LOCATION</scope>
</reference>
<reference key="6">
    <citation type="journal article" date="2007" name="Int. J. Oncol.">
        <title>Identification of CLUAP1 as a human osteosarcoma tumor-associated antigen recognized by the humoral immune system.</title>
        <authorList>
            <person name="Ishikura H."/>
            <person name="Ikeda H."/>
            <person name="Abe H."/>
            <person name="Ohkuri T."/>
            <person name="Hiraga H."/>
            <person name="Isu K."/>
            <person name="Tsukahara T."/>
            <person name="Sato N."/>
            <person name="Kitamura H."/>
            <person name="Iwasaki N."/>
            <person name="Takeda N."/>
            <person name="Minami A."/>
            <person name="Nishimura T."/>
        </authorList>
    </citation>
    <scope>TISSUE SPECIFICITY</scope>
</reference>
<reference key="7">
    <citation type="journal article" date="2009" name="Anal. Chem.">
        <title>Lys-N and trypsin cover complementary parts of the phosphoproteome in a refined SCX-based approach.</title>
        <authorList>
            <person name="Gauci S."/>
            <person name="Helbig A.O."/>
            <person name="Slijper M."/>
            <person name="Krijgsveld J."/>
            <person name="Heck A.J."/>
            <person name="Mohammed S."/>
        </authorList>
    </citation>
    <scope>IDENTIFICATION BY MASS SPECTROMETRY [LARGE SCALE ANALYSIS]</scope>
</reference>
<reference key="8">
    <citation type="journal article" date="2009" name="Sci. Signal.">
        <title>Quantitative phosphoproteomic analysis of T cell receptor signaling reveals system-wide modulation of protein-protein interactions.</title>
        <authorList>
            <person name="Mayya V."/>
            <person name="Lundgren D.H."/>
            <person name="Hwang S.-I."/>
            <person name="Rezaul K."/>
            <person name="Wu L."/>
            <person name="Eng J.K."/>
            <person name="Rodionov V."/>
            <person name="Han D.K."/>
        </authorList>
    </citation>
    <scope>PHOSPHORYLATION [LARGE SCALE ANALYSIS] AT SER-409</scope>
    <scope>IDENTIFICATION BY MASS SPECTROMETRY [LARGE SCALE ANALYSIS]</scope>
    <source>
        <tissue>Leukemic T-cell</tissue>
    </source>
</reference>
<reference key="9">
    <citation type="journal article" date="2015" name="Nat. Cell Biol.">
        <title>Systematic proteomics of the VCP-UBXD adaptor network identifies a role for UBXN10 in regulating ciliogenesis.</title>
        <authorList>
            <person name="Raman M."/>
            <person name="Sergeev M."/>
            <person name="Garnaas M."/>
            <person name="Lydeard J.R."/>
            <person name="Huttlin E.L."/>
            <person name="Goessling W."/>
            <person name="Shah J.V."/>
            <person name="Harper J.W."/>
        </authorList>
    </citation>
    <scope>INTERACTION WITH UBXN10</scope>
</reference>
<keyword id="KW-0025">Alternative splicing</keyword>
<keyword id="KW-0966">Cell projection</keyword>
<keyword id="KW-0969">Cilium</keyword>
<keyword id="KW-0970">Cilium biogenesis/degradation</keyword>
<keyword id="KW-0175">Coiled coil</keyword>
<keyword id="KW-0539">Nucleus</keyword>
<keyword id="KW-0597">Phosphoprotein</keyword>
<keyword id="KW-1267">Proteomics identification</keyword>
<keyword id="KW-1185">Reference proteome</keyword>
<accession>Q96AJ1</accession>
<accession>O75138</accession>
<accession>Q65ZA3</accession>
<accession>Q9H8R4</accession>
<accession>Q9H8T1</accession>
<sequence length="413" mass="48125">MSFRDLRNFTEMMRALGYPRHISMENFRTPNFGLVSEVLLWLVKRYEPQTDIPPDVDTEQDRVFFIKAIAQFMATKAHIKLNTKKLYQADGYAVKELLKITSVLYNAMKTKGMEGSEIVEEDVNKFKFDLGSKIADLKAARQLASEITSKGASLYDLLGMEVELREMRTEAIARPLEINETEKVMRIAIKEILTQVQKTKDLLNNVASDEANLEAKIEKRKLELERNRKRLETLQSVRPCFMDEYEKTEEELQKQYDTYLEKFQNLTYLEQQLEDHHRMEQERFEEAKNTLCLIQNKLKEEEKRLLKSGSNDDSDIDIQEDDESDSELEERRLPKPQTAMEMLMQGRPGKRIVGTMQGGDSDDNEDSEESEIDMEDDDDEDDDLEDESISLSPTKPNRRVRKSEPLDESDNDF</sequence>
<gene>
    <name type="primary">CLUAP1</name>
    <name type="synonym">KIAA0643</name>
</gene>